<feature type="chain" id="PRO_1000083337" description="2-succinylbenzoate--CoA ligase">
    <location>
        <begin position="1"/>
        <end position="492"/>
    </location>
</feature>
<name>MENE_STAAT</name>
<comment type="function">
    <text evidence="1">Converts 2-succinylbenzoate (OSB) to 2-succinylbenzoyl-CoA (OSB-CoA).</text>
</comment>
<comment type="catalytic activity">
    <reaction evidence="1">
        <text>2-succinylbenzoate + ATP + CoA = 2-succinylbenzoyl-CoA + AMP + diphosphate</text>
        <dbReference type="Rhea" id="RHEA:17009"/>
        <dbReference type="ChEBI" id="CHEBI:18325"/>
        <dbReference type="ChEBI" id="CHEBI:30616"/>
        <dbReference type="ChEBI" id="CHEBI:33019"/>
        <dbReference type="ChEBI" id="CHEBI:57287"/>
        <dbReference type="ChEBI" id="CHEBI:57364"/>
        <dbReference type="ChEBI" id="CHEBI:456215"/>
        <dbReference type="EC" id="6.2.1.26"/>
    </reaction>
</comment>
<comment type="pathway">
    <text evidence="1">Quinol/quinone metabolism; 1,4-dihydroxy-2-naphthoate biosynthesis; 1,4-dihydroxy-2-naphthoate from chorismate: step 5/7.</text>
</comment>
<comment type="pathway">
    <text evidence="1">Quinol/quinone metabolism; menaquinone biosynthesis.</text>
</comment>
<comment type="similarity">
    <text evidence="1">Belongs to the ATP-dependent AMP-binding enzyme family. MenE subfamily.</text>
</comment>
<keyword id="KW-0067">ATP-binding</keyword>
<keyword id="KW-0436">Ligase</keyword>
<keyword id="KW-0474">Menaquinone biosynthesis</keyword>
<keyword id="KW-0547">Nucleotide-binding</keyword>
<reference key="1">
    <citation type="journal article" date="2007" name="BMC Microbiol.">
        <title>Subtle genetic changes enhance virulence of methicillin resistant and sensitive Staphylococcus aureus.</title>
        <authorList>
            <person name="Highlander S.K."/>
            <person name="Hulten K.G."/>
            <person name="Qin X."/>
            <person name="Jiang H."/>
            <person name="Yerrapragada S."/>
            <person name="Mason E.O. Jr."/>
            <person name="Shang Y."/>
            <person name="Williams T.M."/>
            <person name="Fortunov R.M."/>
            <person name="Liu Y."/>
            <person name="Igboeli O."/>
            <person name="Petrosino J."/>
            <person name="Tirumalai M."/>
            <person name="Uzman A."/>
            <person name="Fox G.E."/>
            <person name="Cardenas A.M."/>
            <person name="Muzny D.M."/>
            <person name="Hemphill L."/>
            <person name="Ding Y."/>
            <person name="Dugan S."/>
            <person name="Blyth P.R."/>
            <person name="Buhay C.J."/>
            <person name="Dinh H.H."/>
            <person name="Hawes A.C."/>
            <person name="Holder M."/>
            <person name="Kovar C.L."/>
            <person name="Lee S.L."/>
            <person name="Liu W."/>
            <person name="Nazareth L.V."/>
            <person name="Wang Q."/>
            <person name="Zhou J."/>
            <person name="Kaplan S.L."/>
            <person name="Weinstock G.M."/>
        </authorList>
    </citation>
    <scope>NUCLEOTIDE SEQUENCE [LARGE SCALE GENOMIC DNA]</scope>
    <source>
        <strain>USA300 / TCH1516</strain>
    </source>
</reference>
<evidence type="ECO:0000255" key="1">
    <source>
        <dbReference type="HAMAP-Rule" id="MF_00731"/>
    </source>
</evidence>
<proteinExistence type="inferred from homology"/>
<dbReference type="EC" id="6.2.1.26" evidence="1"/>
<dbReference type="EMBL" id="CP000730">
    <property type="protein sequence ID" value="ABX29789.1"/>
    <property type="molecule type" value="Genomic_DNA"/>
</dbReference>
<dbReference type="RefSeq" id="WP_000348360.1">
    <property type="nucleotide sequence ID" value="NC_010079.1"/>
</dbReference>
<dbReference type="SMR" id="A8Z4L9"/>
<dbReference type="KEGG" id="sax:USA300HOU_1784"/>
<dbReference type="HOGENOM" id="CLU_000022_59_0_9"/>
<dbReference type="UniPathway" id="UPA00079"/>
<dbReference type="UniPathway" id="UPA01057">
    <property type="reaction ID" value="UER00166"/>
</dbReference>
<dbReference type="GO" id="GO:0005524">
    <property type="term" value="F:ATP binding"/>
    <property type="evidence" value="ECO:0007669"/>
    <property type="project" value="UniProtKB-KW"/>
</dbReference>
<dbReference type="GO" id="GO:0008756">
    <property type="term" value="F:o-succinylbenzoate-CoA ligase activity"/>
    <property type="evidence" value="ECO:0007669"/>
    <property type="project" value="UniProtKB-UniRule"/>
</dbReference>
<dbReference type="GO" id="GO:0009234">
    <property type="term" value="P:menaquinone biosynthetic process"/>
    <property type="evidence" value="ECO:0007669"/>
    <property type="project" value="UniProtKB-UniRule"/>
</dbReference>
<dbReference type="CDD" id="cd05912">
    <property type="entry name" value="OSB_CoA_lg"/>
    <property type="match status" value="1"/>
</dbReference>
<dbReference type="Gene3D" id="3.30.300.30">
    <property type="match status" value="1"/>
</dbReference>
<dbReference type="Gene3D" id="3.40.50.12780">
    <property type="entry name" value="N-terminal domain of ligase-like"/>
    <property type="match status" value="1"/>
</dbReference>
<dbReference type="HAMAP" id="MF_00731">
    <property type="entry name" value="MenE"/>
    <property type="match status" value="1"/>
</dbReference>
<dbReference type="InterPro" id="IPR025110">
    <property type="entry name" value="AMP-bd_C"/>
</dbReference>
<dbReference type="InterPro" id="IPR045851">
    <property type="entry name" value="AMP-bd_C_sf"/>
</dbReference>
<dbReference type="InterPro" id="IPR000873">
    <property type="entry name" value="AMP-dep_synth/lig_dom"/>
</dbReference>
<dbReference type="InterPro" id="IPR042099">
    <property type="entry name" value="ANL_N_sf"/>
</dbReference>
<dbReference type="InterPro" id="IPR050237">
    <property type="entry name" value="ATP-dep_AMP-bd_enzyme"/>
</dbReference>
<dbReference type="InterPro" id="IPR010192">
    <property type="entry name" value="MenE"/>
</dbReference>
<dbReference type="NCBIfam" id="TIGR01923">
    <property type="entry name" value="menE"/>
    <property type="match status" value="1"/>
</dbReference>
<dbReference type="PANTHER" id="PTHR43767">
    <property type="entry name" value="LONG-CHAIN-FATTY-ACID--COA LIGASE"/>
    <property type="match status" value="1"/>
</dbReference>
<dbReference type="PANTHER" id="PTHR43767:SF1">
    <property type="entry name" value="NONRIBOSOMAL PEPTIDE SYNTHASE PES1 (EUROFUNG)-RELATED"/>
    <property type="match status" value="1"/>
</dbReference>
<dbReference type="Pfam" id="PF00501">
    <property type="entry name" value="AMP-binding"/>
    <property type="match status" value="1"/>
</dbReference>
<dbReference type="Pfam" id="PF13193">
    <property type="entry name" value="AMP-binding_C"/>
    <property type="match status" value="1"/>
</dbReference>
<dbReference type="SUPFAM" id="SSF56801">
    <property type="entry name" value="Acetyl-CoA synthetase-like"/>
    <property type="match status" value="1"/>
</dbReference>
<organism>
    <name type="scientific">Staphylococcus aureus (strain USA300 / TCH1516)</name>
    <dbReference type="NCBI Taxonomy" id="451516"/>
    <lineage>
        <taxon>Bacteria</taxon>
        <taxon>Bacillati</taxon>
        <taxon>Bacillota</taxon>
        <taxon>Bacilli</taxon>
        <taxon>Bacillales</taxon>
        <taxon>Staphylococcaceae</taxon>
        <taxon>Staphylococcus</taxon>
    </lineage>
</organism>
<gene>
    <name evidence="1" type="primary">menE</name>
    <name type="ordered locus">USA300HOU_1784</name>
</gene>
<sequence>MDFWLYKQAQQNGHHIAITDGQESYTYQNLYCEASLLAKRLKAYQQSRVGLYIDNSIQSIILIHACWLANIEIAMINTRLTPNEMTNQMKSIDVQLIFCTLPLELRGFQIVSLDDIEFAGRDITTNSLLDNTMGIQYETSNETVVPKESPSNILNTSFNLDDIASIMFTSGTTGPQKAVPQTFRNHYASAIGCKESLGFDRDTNWLSVLPIYHISGLSVLLRAVIEGFTVRIVDKFNAEQILTMIKNERITHISLVPQTLNWLMQQGLHEPYNLQKILLGGAKLSATMIETALQYNLPIYNSFGMTETCSQFLTATPEMLHARPDTVGMPSANVDVKIKNPNKEGHGELMIKGANVMNVYLYPTDLTGTFENGYFNTGDIAEIDHEGYVMIYDRRKDLIISGGENIYPYQIETVAKQFPGISDAVCVGHPDDTWGQVPKLYFVSESDISKAQLIAYLSQHLAKYKVPKHFEKVDTLPYTSTGKLQRNKLYRG</sequence>
<accession>A8Z4L9</accession>
<protein>
    <recommendedName>
        <fullName evidence="1">2-succinylbenzoate--CoA ligase</fullName>
        <ecNumber evidence="1">6.2.1.26</ecNumber>
    </recommendedName>
    <alternativeName>
        <fullName evidence="1">o-succinylbenzoyl-CoA synthetase</fullName>
        <shortName evidence="1">OSB-CoA synthetase</shortName>
    </alternativeName>
</protein>